<comment type="catalytic activity">
    <reaction evidence="1">
        <text>tRNA(Gly) + glycine + ATP = glycyl-tRNA(Gly) + AMP + diphosphate</text>
        <dbReference type="Rhea" id="RHEA:16013"/>
        <dbReference type="Rhea" id="RHEA-COMP:9664"/>
        <dbReference type="Rhea" id="RHEA-COMP:9683"/>
        <dbReference type="ChEBI" id="CHEBI:30616"/>
        <dbReference type="ChEBI" id="CHEBI:33019"/>
        <dbReference type="ChEBI" id="CHEBI:57305"/>
        <dbReference type="ChEBI" id="CHEBI:78442"/>
        <dbReference type="ChEBI" id="CHEBI:78522"/>
        <dbReference type="ChEBI" id="CHEBI:456215"/>
        <dbReference type="EC" id="6.1.1.14"/>
    </reaction>
</comment>
<comment type="subunit">
    <text evidence="1">Tetramer of two alpha and two beta subunits.</text>
</comment>
<comment type="subcellular location">
    <subcellularLocation>
        <location evidence="1">Cytoplasm</location>
    </subcellularLocation>
</comment>
<comment type="similarity">
    <text evidence="1">Belongs to the class-II aminoacyl-tRNA synthetase family.</text>
</comment>
<evidence type="ECO:0000255" key="1">
    <source>
        <dbReference type="HAMAP-Rule" id="MF_00255"/>
    </source>
</evidence>
<evidence type="ECO:0000256" key="2">
    <source>
        <dbReference type="SAM" id="MobiDB-lite"/>
    </source>
</evidence>
<keyword id="KW-0030">Aminoacyl-tRNA synthetase</keyword>
<keyword id="KW-0067">ATP-binding</keyword>
<keyword id="KW-0963">Cytoplasm</keyword>
<keyword id="KW-0436">Ligase</keyword>
<keyword id="KW-0547">Nucleotide-binding</keyword>
<keyword id="KW-0648">Protein biosynthesis</keyword>
<gene>
    <name evidence="1" type="primary">glyS</name>
    <name type="ordered locus">Maqu_0038</name>
</gene>
<dbReference type="EC" id="6.1.1.14" evidence="1"/>
<dbReference type="EMBL" id="CP000514">
    <property type="protein sequence ID" value="ABM17145.1"/>
    <property type="molecule type" value="Genomic_DNA"/>
</dbReference>
<dbReference type="RefSeq" id="WP_011783618.1">
    <property type="nucleotide sequence ID" value="NC_008740.1"/>
</dbReference>
<dbReference type="SMR" id="A1TWM6"/>
<dbReference type="STRING" id="351348.Maqu_0038"/>
<dbReference type="KEGG" id="maq:Maqu_0038"/>
<dbReference type="eggNOG" id="COG0751">
    <property type="taxonomic scope" value="Bacteria"/>
</dbReference>
<dbReference type="HOGENOM" id="CLU_007220_2_2_6"/>
<dbReference type="OrthoDB" id="9775440at2"/>
<dbReference type="Proteomes" id="UP000000998">
    <property type="component" value="Chromosome"/>
</dbReference>
<dbReference type="GO" id="GO:0005829">
    <property type="term" value="C:cytosol"/>
    <property type="evidence" value="ECO:0007669"/>
    <property type="project" value="TreeGrafter"/>
</dbReference>
<dbReference type="GO" id="GO:0004814">
    <property type="term" value="F:arginine-tRNA ligase activity"/>
    <property type="evidence" value="ECO:0007669"/>
    <property type="project" value="InterPro"/>
</dbReference>
<dbReference type="GO" id="GO:0005524">
    <property type="term" value="F:ATP binding"/>
    <property type="evidence" value="ECO:0007669"/>
    <property type="project" value="UniProtKB-UniRule"/>
</dbReference>
<dbReference type="GO" id="GO:0004820">
    <property type="term" value="F:glycine-tRNA ligase activity"/>
    <property type="evidence" value="ECO:0007669"/>
    <property type="project" value="UniProtKB-UniRule"/>
</dbReference>
<dbReference type="GO" id="GO:0006420">
    <property type="term" value="P:arginyl-tRNA aminoacylation"/>
    <property type="evidence" value="ECO:0007669"/>
    <property type="project" value="InterPro"/>
</dbReference>
<dbReference type="GO" id="GO:0006426">
    <property type="term" value="P:glycyl-tRNA aminoacylation"/>
    <property type="evidence" value="ECO:0007669"/>
    <property type="project" value="UniProtKB-UniRule"/>
</dbReference>
<dbReference type="HAMAP" id="MF_00255">
    <property type="entry name" value="Gly_tRNA_synth_beta"/>
    <property type="match status" value="1"/>
</dbReference>
<dbReference type="InterPro" id="IPR008909">
    <property type="entry name" value="DALR_anticod-bd"/>
</dbReference>
<dbReference type="InterPro" id="IPR015944">
    <property type="entry name" value="Gly-tRNA-synth_bsu"/>
</dbReference>
<dbReference type="InterPro" id="IPR006194">
    <property type="entry name" value="Gly-tRNA-synth_heterodimer"/>
</dbReference>
<dbReference type="NCBIfam" id="TIGR00211">
    <property type="entry name" value="glyS"/>
    <property type="match status" value="1"/>
</dbReference>
<dbReference type="PANTHER" id="PTHR30075:SF2">
    <property type="entry name" value="GLYCINE--TRNA LIGASE, CHLOROPLASTIC_MITOCHONDRIAL 2"/>
    <property type="match status" value="1"/>
</dbReference>
<dbReference type="PANTHER" id="PTHR30075">
    <property type="entry name" value="GLYCYL-TRNA SYNTHETASE"/>
    <property type="match status" value="1"/>
</dbReference>
<dbReference type="Pfam" id="PF05746">
    <property type="entry name" value="DALR_1"/>
    <property type="match status" value="1"/>
</dbReference>
<dbReference type="Pfam" id="PF02092">
    <property type="entry name" value="tRNA_synt_2f"/>
    <property type="match status" value="1"/>
</dbReference>
<dbReference type="PRINTS" id="PR01045">
    <property type="entry name" value="TRNASYNTHGB"/>
</dbReference>
<dbReference type="SMART" id="SM00836">
    <property type="entry name" value="DALR_1"/>
    <property type="match status" value="1"/>
</dbReference>
<dbReference type="SUPFAM" id="SSF109604">
    <property type="entry name" value="HD-domain/PDEase-like"/>
    <property type="match status" value="1"/>
</dbReference>
<dbReference type="PROSITE" id="PS50861">
    <property type="entry name" value="AA_TRNA_LIGASE_II_GLYAB"/>
    <property type="match status" value="1"/>
</dbReference>
<name>SYGB_MARN8</name>
<protein>
    <recommendedName>
        <fullName evidence="1">Glycine--tRNA ligase beta subunit</fullName>
        <ecNumber evidence="1">6.1.1.14</ecNumber>
    </recommendedName>
    <alternativeName>
        <fullName evidence="1">Glycyl-tRNA synthetase beta subunit</fullName>
        <shortName evidence="1">GlyRS</shortName>
    </alternativeName>
</protein>
<organism>
    <name type="scientific">Marinobacter nauticus (strain ATCC 700491 / DSM 11845 / VT8)</name>
    <name type="common">Marinobacter aquaeolei</name>
    <dbReference type="NCBI Taxonomy" id="351348"/>
    <lineage>
        <taxon>Bacteria</taxon>
        <taxon>Pseudomonadati</taxon>
        <taxon>Pseudomonadota</taxon>
        <taxon>Gammaproteobacteria</taxon>
        <taxon>Pseudomonadales</taxon>
        <taxon>Marinobacteraceae</taxon>
        <taxon>Marinobacter</taxon>
    </lineage>
</organism>
<sequence length="693" mass="76675">MATQDFLVELGTEELPPKALKPLSDAFTQGIVKGLEEAGVAFGAVESFAAPRRLAVRIRDLADAQPDKSVEKRGPAVKAAFDDSGNPTRALTGFATSLGITPDQLDTMETDKGAWLVYRTVEKGKPTVELMPDLVEKSLAALPIPKRMRWGAWKTEFVRPVHWLILLYGNKVIEAPVMNLKPGNKTRGHRFHCPKELIVPTPADYEVVLKQEGYVLADFAERREQIRAGVAALAEKEAGGKAVIDEDLLDEVTALNEWPVPLMGRFEDRFLEVPAEALISSMKEHQKYFHVVDASDNMLPLFITVANLESKDPSQVISGNEKVIRPRLSDAAFFYETDRKTRLEDRIESLKPIVFQDKLGSIYDKSVRVAALAKKIAEAINSDPALAERAAMLAKTDLVTEMVLEFTDLQGIMGQYYAANDGEHEDVAKALNEQYMPRFAGDDLPTTLTGCAVAIADRIDSLVGLFGINQPPSGTRDPFALRRASLGVLRIIIERQLPLDLQTVCEWAEQNFTVLTENNTASTVVDYMLDRFRAHYDEQGICAEVYLAVHARRPTRPLDFDRRVKAVEAFRQLPEAQALAGANKRVSNILTKQGGDSIGETVDTALLQDAAEKTLAAKVEEQAQQVLPMFEQGDYASALTSLASLREPVDTFFDEVMVMADDDAVRNNRLALLNRLRNLFLRVADISLLPTAG</sequence>
<reference key="1">
    <citation type="journal article" date="2011" name="Appl. Environ. Microbiol.">
        <title>Genomic potential of Marinobacter aquaeolei, a biogeochemical 'opportunitroph'.</title>
        <authorList>
            <person name="Singer E."/>
            <person name="Webb E.A."/>
            <person name="Nelson W.C."/>
            <person name="Heidelberg J.F."/>
            <person name="Ivanova N."/>
            <person name="Pati A."/>
            <person name="Edwards K.J."/>
        </authorList>
    </citation>
    <scope>NUCLEOTIDE SEQUENCE [LARGE SCALE GENOMIC DNA]</scope>
    <source>
        <strain>ATCC 700491 / DSM 11845 / VT8</strain>
    </source>
</reference>
<feature type="chain" id="PRO_1000006379" description="Glycine--tRNA ligase beta subunit">
    <location>
        <begin position="1"/>
        <end position="693"/>
    </location>
</feature>
<feature type="region of interest" description="Disordered" evidence="2">
    <location>
        <begin position="65"/>
        <end position="84"/>
    </location>
</feature>
<feature type="compositionally biased region" description="Basic and acidic residues" evidence="2">
    <location>
        <begin position="65"/>
        <end position="74"/>
    </location>
</feature>
<proteinExistence type="inferred from homology"/>
<accession>A1TWM6</accession>